<name>TTCA_DICNV</name>
<comment type="function">
    <text evidence="1">Catalyzes the ATP-dependent 2-thiolation of cytidine in position 32 of tRNA, to form 2-thiocytidine (s(2)C32). The sulfur atoms are provided by the cysteine/cysteine desulfurase (IscS) system.</text>
</comment>
<comment type="catalytic activity">
    <reaction evidence="1">
        <text>cytidine(32) in tRNA + S-sulfanyl-L-cysteinyl-[cysteine desulfurase] + AH2 + ATP = 2-thiocytidine(32) in tRNA + L-cysteinyl-[cysteine desulfurase] + A + AMP + diphosphate + H(+)</text>
        <dbReference type="Rhea" id="RHEA:57048"/>
        <dbReference type="Rhea" id="RHEA-COMP:10288"/>
        <dbReference type="Rhea" id="RHEA-COMP:12157"/>
        <dbReference type="Rhea" id="RHEA-COMP:12158"/>
        <dbReference type="Rhea" id="RHEA-COMP:14821"/>
        <dbReference type="ChEBI" id="CHEBI:13193"/>
        <dbReference type="ChEBI" id="CHEBI:15378"/>
        <dbReference type="ChEBI" id="CHEBI:17499"/>
        <dbReference type="ChEBI" id="CHEBI:29950"/>
        <dbReference type="ChEBI" id="CHEBI:30616"/>
        <dbReference type="ChEBI" id="CHEBI:33019"/>
        <dbReference type="ChEBI" id="CHEBI:61963"/>
        <dbReference type="ChEBI" id="CHEBI:82748"/>
        <dbReference type="ChEBI" id="CHEBI:141453"/>
        <dbReference type="ChEBI" id="CHEBI:456215"/>
    </reaction>
    <physiologicalReaction direction="left-to-right" evidence="1">
        <dbReference type="Rhea" id="RHEA:57049"/>
    </physiologicalReaction>
</comment>
<comment type="cofactor">
    <cofactor evidence="1">
        <name>Mg(2+)</name>
        <dbReference type="ChEBI" id="CHEBI:18420"/>
    </cofactor>
</comment>
<comment type="cofactor">
    <cofactor evidence="1">
        <name>[4Fe-4S] cluster</name>
        <dbReference type="ChEBI" id="CHEBI:49883"/>
    </cofactor>
    <text evidence="1">Binds 1 [4Fe-4S] cluster per subunit. The cluster is chelated by three Cys residues, the fourth Fe has a free coordination site that may bind a sulfur atom transferred from the persulfide of IscS.</text>
</comment>
<comment type="pathway">
    <text evidence="1">tRNA modification.</text>
</comment>
<comment type="subunit">
    <text evidence="1">Homodimer.</text>
</comment>
<comment type="subcellular location">
    <subcellularLocation>
        <location evidence="1">Cytoplasm</location>
    </subcellularLocation>
</comment>
<comment type="miscellaneous">
    <text evidence="1">The thiolation reaction likely consists of two steps: a first activation step by ATP to form an adenylated intermediate of the target base of tRNA, and a second nucleophilic substitution step of the sulfur (S) atom supplied by the hydrosulfide attached to the Fe-S cluster.</text>
</comment>
<comment type="similarity">
    <text evidence="1">Belongs to the TtcA family.</text>
</comment>
<protein>
    <recommendedName>
        <fullName evidence="1">tRNA-cytidine(32) 2-sulfurtransferase</fullName>
        <ecNumber evidence="1">2.8.1.-</ecNumber>
    </recommendedName>
    <alternativeName>
        <fullName evidence="1">Two-thiocytidine biosynthesis protein A</fullName>
    </alternativeName>
    <alternativeName>
        <fullName evidence="1">tRNA 2-thiocytidine biosynthesis protein TtcA</fullName>
    </alternativeName>
</protein>
<dbReference type="EC" id="2.8.1.-" evidence="1"/>
<dbReference type="EMBL" id="CP000513">
    <property type="protein sequence ID" value="ABQ13822.1"/>
    <property type="molecule type" value="Genomic_DNA"/>
</dbReference>
<dbReference type="RefSeq" id="WP_012031394.1">
    <property type="nucleotide sequence ID" value="NC_009446.1"/>
</dbReference>
<dbReference type="SMR" id="A5EXQ4"/>
<dbReference type="STRING" id="246195.DNO_1088"/>
<dbReference type="KEGG" id="dno:DNO_1088"/>
<dbReference type="eggNOG" id="COG0037">
    <property type="taxonomic scope" value="Bacteria"/>
</dbReference>
<dbReference type="HOGENOM" id="CLU_026481_0_0_6"/>
<dbReference type="OrthoDB" id="9801054at2"/>
<dbReference type="Proteomes" id="UP000000248">
    <property type="component" value="Chromosome"/>
</dbReference>
<dbReference type="GO" id="GO:0005737">
    <property type="term" value="C:cytoplasm"/>
    <property type="evidence" value="ECO:0007669"/>
    <property type="project" value="UniProtKB-SubCell"/>
</dbReference>
<dbReference type="GO" id="GO:0051539">
    <property type="term" value="F:4 iron, 4 sulfur cluster binding"/>
    <property type="evidence" value="ECO:0007669"/>
    <property type="project" value="UniProtKB-UniRule"/>
</dbReference>
<dbReference type="GO" id="GO:0005524">
    <property type="term" value="F:ATP binding"/>
    <property type="evidence" value="ECO:0007669"/>
    <property type="project" value="UniProtKB-UniRule"/>
</dbReference>
<dbReference type="GO" id="GO:0000287">
    <property type="term" value="F:magnesium ion binding"/>
    <property type="evidence" value="ECO:0007669"/>
    <property type="project" value="UniProtKB-UniRule"/>
</dbReference>
<dbReference type="GO" id="GO:0016783">
    <property type="term" value="F:sulfurtransferase activity"/>
    <property type="evidence" value="ECO:0007669"/>
    <property type="project" value="UniProtKB-UniRule"/>
</dbReference>
<dbReference type="GO" id="GO:0000049">
    <property type="term" value="F:tRNA binding"/>
    <property type="evidence" value="ECO:0007669"/>
    <property type="project" value="UniProtKB-KW"/>
</dbReference>
<dbReference type="GO" id="GO:0034227">
    <property type="term" value="P:tRNA thio-modification"/>
    <property type="evidence" value="ECO:0007669"/>
    <property type="project" value="UniProtKB-UniRule"/>
</dbReference>
<dbReference type="CDD" id="cd24138">
    <property type="entry name" value="TtcA-like"/>
    <property type="match status" value="1"/>
</dbReference>
<dbReference type="Gene3D" id="3.40.50.620">
    <property type="entry name" value="HUPs"/>
    <property type="match status" value="1"/>
</dbReference>
<dbReference type="HAMAP" id="MF_01850">
    <property type="entry name" value="TtcA"/>
    <property type="match status" value="1"/>
</dbReference>
<dbReference type="InterPro" id="IPR014729">
    <property type="entry name" value="Rossmann-like_a/b/a_fold"/>
</dbReference>
<dbReference type="InterPro" id="IPR011063">
    <property type="entry name" value="TilS/TtcA_N"/>
</dbReference>
<dbReference type="InterPro" id="IPR012089">
    <property type="entry name" value="tRNA_Cyd_32_2_STrfase"/>
</dbReference>
<dbReference type="InterPro" id="IPR035107">
    <property type="entry name" value="tRNA_thiolation_TtcA_Ctu1"/>
</dbReference>
<dbReference type="NCBIfam" id="NF007972">
    <property type="entry name" value="PRK10696.1"/>
    <property type="match status" value="1"/>
</dbReference>
<dbReference type="PANTHER" id="PTHR43686:SF1">
    <property type="entry name" value="AMINOTRAN_5 DOMAIN-CONTAINING PROTEIN"/>
    <property type="match status" value="1"/>
</dbReference>
<dbReference type="PANTHER" id="PTHR43686">
    <property type="entry name" value="SULFURTRANSFERASE-RELATED"/>
    <property type="match status" value="1"/>
</dbReference>
<dbReference type="Pfam" id="PF01171">
    <property type="entry name" value="ATP_bind_3"/>
    <property type="match status" value="1"/>
</dbReference>
<dbReference type="PIRSF" id="PIRSF004976">
    <property type="entry name" value="ATPase_YdaO"/>
    <property type="match status" value="1"/>
</dbReference>
<dbReference type="SUPFAM" id="SSF52402">
    <property type="entry name" value="Adenine nucleotide alpha hydrolases-like"/>
    <property type="match status" value="1"/>
</dbReference>
<gene>
    <name evidence="1" type="primary">ttcA</name>
    <name type="ordered locus">DNO_1088</name>
</gene>
<evidence type="ECO:0000255" key="1">
    <source>
        <dbReference type="HAMAP-Rule" id="MF_01850"/>
    </source>
</evidence>
<reference key="1">
    <citation type="journal article" date="2007" name="Nat. Biotechnol.">
        <title>Genome sequence and identification of candidate vaccine antigens from the animal pathogen Dichelobacter nodosus.</title>
        <authorList>
            <person name="Myers G.S.A."/>
            <person name="Parker D."/>
            <person name="Al-Hasani K."/>
            <person name="Kennan R.M."/>
            <person name="Seemann T."/>
            <person name="Ren Q."/>
            <person name="Badger J.H."/>
            <person name="Selengut J.D."/>
            <person name="Deboy R.T."/>
            <person name="Tettelin H."/>
            <person name="Boyce J.D."/>
            <person name="McCarl V.P."/>
            <person name="Han X."/>
            <person name="Nelson W.C."/>
            <person name="Madupu R."/>
            <person name="Mohamoud Y."/>
            <person name="Holley T."/>
            <person name="Fedorova N."/>
            <person name="Khouri H."/>
            <person name="Bottomley S.P."/>
            <person name="Whittington R.J."/>
            <person name="Adler B."/>
            <person name="Songer J.G."/>
            <person name="Rood J.I."/>
            <person name="Paulsen I.T."/>
        </authorList>
    </citation>
    <scope>NUCLEOTIDE SEQUENCE [LARGE SCALE GENOMIC DNA]</scope>
    <source>
        <strain>VCS1703A</strain>
    </source>
</reference>
<sequence>MSVSQNKLCKRLRRLVGKAIDDYQMIADGDRIMVCLSGGKDSYALLDILLALQKSAPIHFEIIAVNLNQKFPNFPERVLPDYLEKLGVKYDIIEHDTYQVVMEKIPAGKTMCSLCSRLRRGILYRYAEEHGITKIALGHHKIDVIETFFLNLFFTGRLKAMPAKLLSDNKKQIVIRPLVYCDEKDIVKYAKLKAFPIIPSNLCGVQKNMQRTIIKEMLLAWEKDYPQRIEHIFAALTKTVPSHLLDTELFNFAEIEQKAIRFCEESD</sequence>
<feature type="chain" id="PRO_0000348712" description="tRNA-cytidine(32) 2-sulfurtransferase">
    <location>
        <begin position="1"/>
        <end position="267"/>
    </location>
</feature>
<feature type="short sequence motif" description="PP-loop motif" evidence="1">
    <location>
        <begin position="37"/>
        <end position="42"/>
    </location>
</feature>
<feature type="binding site" evidence="1">
    <location>
        <position position="112"/>
    </location>
    <ligand>
        <name>[4Fe-4S] cluster</name>
        <dbReference type="ChEBI" id="CHEBI:49883"/>
    </ligand>
</feature>
<feature type="binding site" evidence="1">
    <location>
        <position position="115"/>
    </location>
    <ligand>
        <name>[4Fe-4S] cluster</name>
        <dbReference type="ChEBI" id="CHEBI:49883"/>
    </ligand>
</feature>
<feature type="binding site" evidence="1">
    <location>
        <position position="203"/>
    </location>
    <ligand>
        <name>[4Fe-4S] cluster</name>
        <dbReference type="ChEBI" id="CHEBI:49883"/>
    </ligand>
</feature>
<proteinExistence type="inferred from homology"/>
<keyword id="KW-0004">4Fe-4S</keyword>
<keyword id="KW-0067">ATP-binding</keyword>
<keyword id="KW-0963">Cytoplasm</keyword>
<keyword id="KW-0408">Iron</keyword>
<keyword id="KW-0411">Iron-sulfur</keyword>
<keyword id="KW-0460">Magnesium</keyword>
<keyword id="KW-0479">Metal-binding</keyword>
<keyword id="KW-0547">Nucleotide-binding</keyword>
<keyword id="KW-1185">Reference proteome</keyword>
<keyword id="KW-0694">RNA-binding</keyword>
<keyword id="KW-0808">Transferase</keyword>
<keyword id="KW-0819">tRNA processing</keyword>
<keyword id="KW-0820">tRNA-binding</keyword>
<organism>
    <name type="scientific">Dichelobacter nodosus (strain VCS1703A)</name>
    <dbReference type="NCBI Taxonomy" id="246195"/>
    <lineage>
        <taxon>Bacteria</taxon>
        <taxon>Pseudomonadati</taxon>
        <taxon>Pseudomonadota</taxon>
        <taxon>Gammaproteobacteria</taxon>
        <taxon>Cardiobacteriales</taxon>
        <taxon>Cardiobacteriaceae</taxon>
        <taxon>Dichelobacter</taxon>
    </lineage>
</organism>
<accession>A5EXQ4</accession>